<organism>
    <name type="scientific">Drosophila melanogaster</name>
    <name type="common">Fruit fly</name>
    <dbReference type="NCBI Taxonomy" id="7227"/>
    <lineage>
        <taxon>Eukaryota</taxon>
        <taxon>Metazoa</taxon>
        <taxon>Ecdysozoa</taxon>
        <taxon>Arthropoda</taxon>
        <taxon>Hexapoda</taxon>
        <taxon>Insecta</taxon>
        <taxon>Pterygota</taxon>
        <taxon>Neoptera</taxon>
        <taxon>Endopterygota</taxon>
        <taxon>Diptera</taxon>
        <taxon>Brachycera</taxon>
        <taxon>Muscomorpha</taxon>
        <taxon>Ephydroidea</taxon>
        <taxon>Drosophilidae</taxon>
        <taxon>Drosophila</taxon>
        <taxon>Sophophora</taxon>
    </lineage>
</organism>
<reference key="1">
    <citation type="journal article" date="2000" name="Science">
        <title>The genome sequence of Drosophila melanogaster.</title>
        <authorList>
            <person name="Adams M.D."/>
            <person name="Celniker S.E."/>
            <person name="Holt R.A."/>
            <person name="Evans C.A."/>
            <person name="Gocayne J.D."/>
            <person name="Amanatides P.G."/>
            <person name="Scherer S.E."/>
            <person name="Li P.W."/>
            <person name="Hoskins R.A."/>
            <person name="Galle R.F."/>
            <person name="George R.A."/>
            <person name="Lewis S.E."/>
            <person name="Richards S."/>
            <person name="Ashburner M."/>
            <person name="Henderson S.N."/>
            <person name="Sutton G.G."/>
            <person name="Wortman J.R."/>
            <person name="Yandell M.D."/>
            <person name="Zhang Q."/>
            <person name="Chen L.X."/>
            <person name="Brandon R.C."/>
            <person name="Rogers Y.-H.C."/>
            <person name="Blazej R.G."/>
            <person name="Champe M."/>
            <person name="Pfeiffer B.D."/>
            <person name="Wan K.H."/>
            <person name="Doyle C."/>
            <person name="Baxter E.G."/>
            <person name="Helt G."/>
            <person name="Nelson C.R."/>
            <person name="Miklos G.L.G."/>
            <person name="Abril J.F."/>
            <person name="Agbayani A."/>
            <person name="An H.-J."/>
            <person name="Andrews-Pfannkoch C."/>
            <person name="Baldwin D."/>
            <person name="Ballew R.M."/>
            <person name="Basu A."/>
            <person name="Baxendale J."/>
            <person name="Bayraktaroglu L."/>
            <person name="Beasley E.M."/>
            <person name="Beeson K.Y."/>
            <person name="Benos P.V."/>
            <person name="Berman B.P."/>
            <person name="Bhandari D."/>
            <person name="Bolshakov S."/>
            <person name="Borkova D."/>
            <person name="Botchan M.R."/>
            <person name="Bouck J."/>
            <person name="Brokstein P."/>
            <person name="Brottier P."/>
            <person name="Burtis K.C."/>
            <person name="Busam D.A."/>
            <person name="Butler H."/>
            <person name="Cadieu E."/>
            <person name="Center A."/>
            <person name="Chandra I."/>
            <person name="Cherry J.M."/>
            <person name="Cawley S."/>
            <person name="Dahlke C."/>
            <person name="Davenport L.B."/>
            <person name="Davies P."/>
            <person name="de Pablos B."/>
            <person name="Delcher A."/>
            <person name="Deng Z."/>
            <person name="Mays A.D."/>
            <person name="Dew I."/>
            <person name="Dietz S.M."/>
            <person name="Dodson K."/>
            <person name="Doup L.E."/>
            <person name="Downes M."/>
            <person name="Dugan-Rocha S."/>
            <person name="Dunkov B.C."/>
            <person name="Dunn P."/>
            <person name="Durbin K.J."/>
            <person name="Evangelista C.C."/>
            <person name="Ferraz C."/>
            <person name="Ferriera S."/>
            <person name="Fleischmann W."/>
            <person name="Fosler C."/>
            <person name="Gabrielian A.E."/>
            <person name="Garg N.S."/>
            <person name="Gelbart W.M."/>
            <person name="Glasser K."/>
            <person name="Glodek A."/>
            <person name="Gong F."/>
            <person name="Gorrell J.H."/>
            <person name="Gu Z."/>
            <person name="Guan P."/>
            <person name="Harris M."/>
            <person name="Harris N.L."/>
            <person name="Harvey D.A."/>
            <person name="Heiman T.J."/>
            <person name="Hernandez J.R."/>
            <person name="Houck J."/>
            <person name="Hostin D."/>
            <person name="Houston K.A."/>
            <person name="Howland T.J."/>
            <person name="Wei M.-H."/>
            <person name="Ibegwam C."/>
            <person name="Jalali M."/>
            <person name="Kalush F."/>
            <person name="Karpen G.H."/>
            <person name="Ke Z."/>
            <person name="Kennison J.A."/>
            <person name="Ketchum K.A."/>
            <person name="Kimmel B.E."/>
            <person name="Kodira C.D."/>
            <person name="Kraft C.L."/>
            <person name="Kravitz S."/>
            <person name="Kulp D."/>
            <person name="Lai Z."/>
            <person name="Lasko P."/>
            <person name="Lei Y."/>
            <person name="Levitsky A.A."/>
            <person name="Li J.H."/>
            <person name="Li Z."/>
            <person name="Liang Y."/>
            <person name="Lin X."/>
            <person name="Liu X."/>
            <person name="Mattei B."/>
            <person name="McIntosh T.C."/>
            <person name="McLeod M.P."/>
            <person name="McPherson D."/>
            <person name="Merkulov G."/>
            <person name="Milshina N.V."/>
            <person name="Mobarry C."/>
            <person name="Morris J."/>
            <person name="Moshrefi A."/>
            <person name="Mount S.M."/>
            <person name="Moy M."/>
            <person name="Murphy B."/>
            <person name="Murphy L."/>
            <person name="Muzny D.M."/>
            <person name="Nelson D.L."/>
            <person name="Nelson D.R."/>
            <person name="Nelson K.A."/>
            <person name="Nixon K."/>
            <person name="Nusskern D.R."/>
            <person name="Pacleb J.M."/>
            <person name="Palazzolo M."/>
            <person name="Pittman G.S."/>
            <person name="Pan S."/>
            <person name="Pollard J."/>
            <person name="Puri V."/>
            <person name="Reese M.G."/>
            <person name="Reinert K."/>
            <person name="Remington K."/>
            <person name="Saunders R.D.C."/>
            <person name="Scheeler F."/>
            <person name="Shen H."/>
            <person name="Shue B.C."/>
            <person name="Siden-Kiamos I."/>
            <person name="Simpson M."/>
            <person name="Skupski M.P."/>
            <person name="Smith T.J."/>
            <person name="Spier E."/>
            <person name="Spradling A.C."/>
            <person name="Stapleton M."/>
            <person name="Strong R."/>
            <person name="Sun E."/>
            <person name="Svirskas R."/>
            <person name="Tector C."/>
            <person name="Turner R."/>
            <person name="Venter E."/>
            <person name="Wang A.H."/>
            <person name="Wang X."/>
            <person name="Wang Z.-Y."/>
            <person name="Wassarman D.A."/>
            <person name="Weinstock G.M."/>
            <person name="Weissenbach J."/>
            <person name="Williams S.M."/>
            <person name="Woodage T."/>
            <person name="Worley K.C."/>
            <person name="Wu D."/>
            <person name="Yang S."/>
            <person name="Yao Q.A."/>
            <person name="Ye J."/>
            <person name="Yeh R.-F."/>
            <person name="Zaveri J.S."/>
            <person name="Zhan M."/>
            <person name="Zhang G."/>
            <person name="Zhao Q."/>
            <person name="Zheng L."/>
            <person name="Zheng X.H."/>
            <person name="Zhong F.N."/>
            <person name="Zhong W."/>
            <person name="Zhou X."/>
            <person name="Zhu S.C."/>
            <person name="Zhu X."/>
            <person name="Smith H.O."/>
            <person name="Gibbs R.A."/>
            <person name="Myers E.W."/>
            <person name="Rubin G.M."/>
            <person name="Venter J.C."/>
        </authorList>
    </citation>
    <scope>NUCLEOTIDE SEQUENCE [LARGE SCALE GENOMIC DNA]</scope>
    <source>
        <strain>Berkeley</strain>
    </source>
</reference>
<reference key="2">
    <citation type="journal article" date="2002" name="Genome Biol.">
        <title>Annotation of the Drosophila melanogaster euchromatic genome: a systematic review.</title>
        <authorList>
            <person name="Misra S."/>
            <person name="Crosby M.A."/>
            <person name="Mungall C.J."/>
            <person name="Matthews B.B."/>
            <person name="Campbell K.S."/>
            <person name="Hradecky P."/>
            <person name="Huang Y."/>
            <person name="Kaminker J.S."/>
            <person name="Millburn G.H."/>
            <person name="Prochnik S.E."/>
            <person name="Smith C.D."/>
            <person name="Tupy J.L."/>
            <person name="Whitfield E.J."/>
            <person name="Bayraktaroglu L."/>
            <person name="Berman B.P."/>
            <person name="Bettencourt B.R."/>
            <person name="Celniker S.E."/>
            <person name="de Grey A.D.N.J."/>
            <person name="Drysdale R.A."/>
            <person name="Harris N.L."/>
            <person name="Richter J."/>
            <person name="Russo S."/>
            <person name="Schroeder A.J."/>
            <person name="Shu S.Q."/>
            <person name="Stapleton M."/>
            <person name="Yamada C."/>
            <person name="Ashburner M."/>
            <person name="Gelbart W.M."/>
            <person name="Rubin G.M."/>
            <person name="Lewis S.E."/>
        </authorList>
    </citation>
    <scope>GENOME REANNOTATION</scope>
    <source>
        <strain>Berkeley</strain>
    </source>
</reference>
<reference key="3">
    <citation type="submission" date="2002-11" db="EMBL/GenBank/DDBJ databases">
        <authorList>
            <person name="Stapleton M."/>
            <person name="Brokstein P."/>
            <person name="Hong L."/>
            <person name="Agbayani A."/>
            <person name="Carlson J."/>
            <person name="Champe M."/>
            <person name="Chavez C."/>
            <person name="Dorsett V."/>
            <person name="Dresnek D."/>
            <person name="Farfan D."/>
            <person name="Frise E."/>
            <person name="George R."/>
            <person name="Gonzalez M."/>
            <person name="Guarin H."/>
            <person name="Kronmiller B."/>
            <person name="Li P."/>
            <person name="Liao G."/>
            <person name="Miranda A."/>
            <person name="Mungall C.J."/>
            <person name="Nunoo J."/>
            <person name="Pacleb J."/>
            <person name="Paragas V."/>
            <person name="Park S."/>
            <person name="Patel S."/>
            <person name="Phouanenavong S."/>
            <person name="Wan K."/>
            <person name="Yu C."/>
            <person name="Lewis S.E."/>
            <person name="Rubin G.M."/>
            <person name="Celniker S."/>
        </authorList>
    </citation>
    <scope>NUCLEOTIDE SEQUENCE [LARGE SCALE MRNA]</scope>
    <source>
        <strain>Berkeley</strain>
        <tissue>Embryo</tissue>
    </source>
</reference>
<reference key="4">
    <citation type="journal article" date="2014" name="Nucleic Acids Res.">
        <title>Human 4E-T represses translation of bound mRNAs and enhances microRNA-mediated silencing.</title>
        <authorList>
            <person name="Kamenska A."/>
            <person name="Lu W.T."/>
            <person name="Kubacka D."/>
            <person name="Broomhead H."/>
            <person name="Minshall N."/>
            <person name="Bushell M."/>
            <person name="Standart N."/>
        </authorList>
    </citation>
    <scope>SUBCELLULAR LOCATION</scope>
    <scope>TISSUE SPECIFICITY</scope>
</reference>
<reference key="5">
    <citation type="journal article" date="2019" name="Genes Dev.">
        <title>Molecular basis for GIGYF-Me31B complex assembly in 4EHP-mediated translational repression.</title>
        <authorList>
            <person name="Peter D."/>
            <person name="Ruscica V."/>
            <person name="Bawankar P."/>
            <person name="Weber R."/>
            <person name="Helms S."/>
            <person name="Valkov E."/>
            <person name="Igreja C."/>
            <person name="Izaurralde E."/>
        </authorList>
    </citation>
    <scope>INTERACTION WITH DDX6/ME31B</scope>
</reference>
<reference key="6">
    <citation type="journal article" date="2015" name="Mol. Cell">
        <title>Molecular architecture of 4E-BP translational inhibitors bound to eIF4E.</title>
        <authorList>
            <person name="Peter D."/>
            <person name="Igreja C."/>
            <person name="Weber R."/>
            <person name="Wohlbold L."/>
            <person name="Weiler C."/>
            <person name="Ebertsch L."/>
            <person name="Weichenrieder O."/>
            <person name="Izaurralde E."/>
        </authorList>
    </citation>
    <scope>X-RAY CRYSTALLOGRAPHY (2.15 ANGSTROMS) OF 9-44 IN COMPLEX WITH EIF4E1</scope>
</reference>
<name>4ET_DROME</name>
<evidence type="ECO:0000250" key="1">
    <source>
        <dbReference type="UniProtKB" id="Q9NRA8"/>
    </source>
</evidence>
<evidence type="ECO:0000256" key="2">
    <source>
        <dbReference type="SAM" id="MobiDB-lite"/>
    </source>
</evidence>
<evidence type="ECO:0000269" key="3">
    <source>
    </source>
</evidence>
<evidence type="ECO:0000269" key="4">
    <source>
    </source>
</evidence>
<evidence type="ECO:0000269" key="5">
    <source>
    </source>
</evidence>
<evidence type="ECO:0000303" key="6">
    <source>
    </source>
</evidence>
<evidence type="ECO:0000305" key="7"/>
<evidence type="ECO:0000312" key="8">
    <source>
        <dbReference type="FlyBase" id="FBgn0052016"/>
    </source>
</evidence>
<evidence type="ECO:0007829" key="9">
    <source>
        <dbReference type="PDB" id="4UE9"/>
    </source>
</evidence>
<gene>
    <name evidence="6 8" type="primary">4E-T</name>
    <name evidence="8" type="ORF">CG32016</name>
</gene>
<protein>
    <recommendedName>
        <fullName evidence="6">Eukaryotic translation initiation factor 4E transporter</fullName>
        <shortName evidence="6">4E-T</shortName>
        <shortName evidence="6">Dm4E-T</shortName>
        <shortName evidence="6">eIF4E transporter</shortName>
    </recommendedName>
</protein>
<feature type="chain" id="PRO_0000450888" description="Eukaryotic translation initiation factor 4E transporter">
    <location>
        <begin position="1"/>
        <end position="1010"/>
    </location>
</feature>
<feature type="region of interest" description="Disordered" evidence="2">
    <location>
        <begin position="154"/>
        <end position="182"/>
    </location>
</feature>
<feature type="region of interest" description="Disordered" evidence="2">
    <location>
        <begin position="196"/>
        <end position="277"/>
    </location>
</feature>
<feature type="region of interest" description="Disordered" evidence="2">
    <location>
        <begin position="289"/>
        <end position="320"/>
    </location>
</feature>
<feature type="region of interest" description="Disordered" evidence="2">
    <location>
        <begin position="354"/>
        <end position="391"/>
    </location>
</feature>
<feature type="region of interest" description="Disordered" evidence="2">
    <location>
        <begin position="921"/>
        <end position="960"/>
    </location>
</feature>
<feature type="short sequence motif" description="YXXXXLphi motif" evidence="1">
    <location>
        <begin position="10"/>
        <end position="16"/>
    </location>
</feature>
<feature type="compositionally biased region" description="Polar residues" evidence="2">
    <location>
        <begin position="201"/>
        <end position="211"/>
    </location>
</feature>
<feature type="compositionally biased region" description="Basic and acidic residues" evidence="2">
    <location>
        <begin position="227"/>
        <end position="247"/>
    </location>
</feature>
<feature type="compositionally biased region" description="Polar residues" evidence="2">
    <location>
        <begin position="248"/>
        <end position="263"/>
    </location>
</feature>
<feature type="compositionally biased region" description="Basic and acidic residues" evidence="2">
    <location>
        <begin position="354"/>
        <end position="364"/>
    </location>
</feature>
<feature type="compositionally biased region" description="Basic and acidic residues" evidence="2">
    <location>
        <begin position="372"/>
        <end position="384"/>
    </location>
</feature>
<feature type="compositionally biased region" description="Polar residues" evidence="2">
    <location>
        <begin position="934"/>
        <end position="953"/>
    </location>
</feature>
<feature type="splice variant" id="VSP_060743" description="In isoform H.">
    <location>
        <begin position="695"/>
        <end position="725"/>
    </location>
</feature>
<feature type="helix" evidence="9">
    <location>
        <begin position="12"/>
        <end position="17"/>
    </location>
</feature>
<feature type="turn" evidence="9">
    <location>
        <begin position="18"/>
        <end position="20"/>
    </location>
</feature>
<feature type="turn" evidence="9">
    <location>
        <begin position="22"/>
        <end position="24"/>
    </location>
</feature>
<proteinExistence type="evidence at protein level"/>
<comment type="function">
    <text evidence="1">eIF4E1-binding protein that regulates translation and stability of mRNAs in processing bodies (P-bodies) (By similarity). Probably plays a role in P-bodies to coordinate the storage of translationally inactive mRNAs in the cytoplasm and prevent their degradation (By similarity). Acts as a binding platform for multiple RNA-binding proteins. Required for the formation of P-bodies (By similarity).</text>
</comment>
<comment type="subunit">
    <text evidence="4 5">Interacts (via YXXXXLphi motif) with eIF4E1 (PubMed:25702871). Interacts with DDX6/me31B (PubMed:31439631).</text>
</comment>
<comment type="subcellular location">
    <subcellularLocation>
        <location evidence="3">Cytoplasm</location>
        <location evidence="3">P-body</location>
    </subcellularLocation>
    <subcellularLocation>
        <location evidence="3">Cytoplasm</location>
    </subcellularLocation>
    <subcellularLocation>
        <location evidence="3">Nucleus</location>
    </subcellularLocation>
    <text evidence="3">Mainly localizes to processing bodies (P-bodies) (PubMed:24335285). Present at low level in other parts of the cytoplasm and in the nucleus (PubMed:24335285).</text>
</comment>
<comment type="alternative products">
    <event type="alternative splicing"/>
    <isoform>
        <id>Q8IH18-1</id>
        <name>A</name>
        <sequence type="displayed"/>
    </isoform>
    <isoform>
        <id>Q8IH18-2</id>
        <name>H</name>
        <sequence type="described" ref="VSP_060743"/>
    </isoform>
</comment>
<comment type="tissue specificity">
    <text evidence="3">Expressed in all larval and adult organs and tissues, with highest levels in the ovary.</text>
</comment>
<comment type="domain">
    <text evidence="1">The YXXXXLphi motif mediates interaction with eIF4E1.</text>
</comment>
<comment type="similarity">
    <text evidence="7">Belongs to the 4E-T/EIF4E-T family.</text>
</comment>
<sequence>MDTSKISARYSKVDLLALRYEGKSRQRPQCSTRLELQTLGFWKINLNTAALTVSSAYSNQNKNRLSPEADNSSLICSNSSSISSRRAMRNRERANNYYQRFVPTDSLLISGEDKDKDALSHGQPYKLNIIDHRSISSSHLMPAFAKRRFVISKGSNSEESNEGINTCASKGKAASSPSRKGSELDTAETCLNFVQPDHDQCMSSSPTFSTSRQERRIGSGRLLPRSDNWDYKNEKTVEASIENEKETSPNGSGSTSSLNQHNQSQHRSRTFSGRLVERVPEVTDRRFQYDSKKSFDRQGINNRRISGKEPFSTQSRSKRGNSYLIHEEPEWFSAGPKSQLETIDLHGFEDLEKNEERSVTEDKNNQIQQLDKNLDAQASKDEASMRNSNDSLNFREVIPSDEKKHTDENVVTSIQNSTDLGHPNKNKPIQMQPSQNPESEFNFDAFLNMHPLDNSVLSNDETGKSDSKGTSRFSRWFRQKEAANNNEFPGFRESHAQEKRGIPSVKDLEAQMIKVDMRTDLINPIAGSLCQTVQMEKPIARDTEAFKKLLQQLGSQARQHHPCNDDCRTINLSNIANHVHLESKLHQKINDGHLQQPELSVNVPTMPTSSHVFLQKRLEIQHLIQRLHCGDVSHDFLEKELDNPSTPAATKDVIATVLNEYSHSKRNPVVTGDPNIFTQQSFLQPQSVHQHYSQELHSQNTANHTINQLISHGNSPTPLAFTPTSVLRKMTADKDTQSPSTYCQNPQYHVHQQNAKQVGTRENVLEPQLTATMAVQPRMILGGGNFAIGQNNQHLSPNMSQSRNQQVLKWTSGNMQMVHGKTFGRPILKGGLNSMPHSNSALPFTAHKIEMQPIHQPHLQQQQHRFKAVQSVESNLNTESVHQNITSPVGWHQLYMQHQQQHHHTRQQLSQRVIYGEMHRQSNPQMSPPVPGFSDSSDSGNVIKANSLTSPSYQRDERISSPTNQLAQWFSPELLAKASAGKLPLLNVNQALSLEEFERSIQHSSGVVHN</sequence>
<keyword id="KW-0002">3D-structure</keyword>
<keyword id="KW-0025">Alternative splicing</keyword>
<keyword id="KW-0963">Cytoplasm</keyword>
<keyword id="KW-0539">Nucleus</keyword>
<keyword id="KW-1185">Reference proteome</keyword>
<accession>Q8IH18</accession>
<accession>L0MLQ9</accession>
<accession>Q86BR2</accession>
<accession>Q8IMA1</accession>
<dbReference type="EMBL" id="AE014135">
    <property type="protein sequence ID" value="AAF59398.4"/>
    <property type="molecule type" value="Genomic_DNA"/>
</dbReference>
<dbReference type="EMBL" id="AE014135">
    <property type="protein sequence ID" value="AAF59399.3"/>
    <property type="molecule type" value="Genomic_DNA"/>
</dbReference>
<dbReference type="EMBL" id="AE014135">
    <property type="protein sequence ID" value="AAF59400.3"/>
    <property type="molecule type" value="Genomic_DNA"/>
</dbReference>
<dbReference type="EMBL" id="AE014135">
    <property type="protein sequence ID" value="AGB96568.1"/>
    <property type="molecule type" value="Genomic_DNA"/>
</dbReference>
<dbReference type="EMBL" id="BT001473">
    <property type="protein sequence ID" value="AAN71228.1"/>
    <property type="molecule type" value="mRNA"/>
</dbReference>
<dbReference type="RefSeq" id="NP_001259078.1">
    <molecule id="Q8IH18-2"/>
    <property type="nucleotide sequence ID" value="NM_001272149.2"/>
</dbReference>
<dbReference type="RefSeq" id="NP_726618.3">
    <molecule id="Q8IH18-1"/>
    <property type="nucleotide sequence ID" value="NM_166796.2"/>
</dbReference>
<dbReference type="RefSeq" id="NP_726619.2">
    <molecule id="Q8IH18-1"/>
    <property type="nucleotide sequence ID" value="NM_166797.2"/>
</dbReference>
<dbReference type="RefSeq" id="NP_726620.2">
    <molecule id="Q8IH18-1"/>
    <property type="nucleotide sequence ID" value="NM_166798.2"/>
</dbReference>
<dbReference type="PDB" id="4UE9">
    <property type="method" value="X-ray"/>
    <property type="resolution" value="2.15 A"/>
    <property type="chains" value="B=9-44"/>
</dbReference>
<dbReference type="PDBsum" id="4UE9"/>
<dbReference type="SMR" id="Q8IH18"/>
<dbReference type="FunCoup" id="Q8IH18">
    <property type="interactions" value="285"/>
</dbReference>
<dbReference type="IntAct" id="Q8IH18">
    <property type="interactions" value="2"/>
</dbReference>
<dbReference type="STRING" id="7227.FBpp0088297"/>
<dbReference type="PaxDb" id="7227-FBpp0302771"/>
<dbReference type="DNASU" id="43836"/>
<dbReference type="EnsemblMetazoa" id="FBtr0089229">
    <molecule id="Q8IH18-1"/>
    <property type="protein sequence ID" value="FBpp0088293"/>
    <property type="gene ID" value="FBgn0052016"/>
</dbReference>
<dbReference type="EnsemblMetazoa" id="FBtr0089233">
    <molecule id="Q8IH18-1"/>
    <property type="protein sequence ID" value="FBpp0088297"/>
    <property type="gene ID" value="FBgn0052016"/>
</dbReference>
<dbReference type="EnsemblMetazoa" id="FBtr0310651">
    <molecule id="Q8IH18-1"/>
    <property type="protein sequence ID" value="FBpp0302771"/>
    <property type="gene ID" value="FBgn0052016"/>
</dbReference>
<dbReference type="EnsemblMetazoa" id="FBtr0334626">
    <molecule id="Q8IH18-2"/>
    <property type="protein sequence ID" value="FBpp0306688"/>
    <property type="gene ID" value="FBgn0052016"/>
</dbReference>
<dbReference type="GeneID" id="43836"/>
<dbReference type="KEGG" id="dme:Dmel_CG32016"/>
<dbReference type="UCSC" id="CG32016-RA">
    <property type="organism name" value="d. melanogaster"/>
</dbReference>
<dbReference type="UCSC" id="CG32016-RB">
    <molecule id="Q8IH18-1"/>
    <property type="organism name" value="d. melanogaster"/>
</dbReference>
<dbReference type="AGR" id="FB:FBgn0052016"/>
<dbReference type="CTD" id="43836"/>
<dbReference type="FlyBase" id="FBgn0052016">
    <property type="gene designation" value="4E-T"/>
</dbReference>
<dbReference type="VEuPathDB" id="VectorBase:FBgn0052016"/>
<dbReference type="eggNOG" id="ENOG502QRQE">
    <property type="taxonomic scope" value="Eukaryota"/>
</dbReference>
<dbReference type="GeneTree" id="ENSGT00390000012071"/>
<dbReference type="HOGENOM" id="CLU_011837_0_0_1"/>
<dbReference type="InParanoid" id="Q8IH18"/>
<dbReference type="OMA" id="LPRNDNW"/>
<dbReference type="OrthoDB" id="8916892at2759"/>
<dbReference type="PhylomeDB" id="Q8IH18"/>
<dbReference type="SignaLink" id="Q8IH18"/>
<dbReference type="BioGRID-ORCS" id="43836">
    <property type="hits" value="0 hits in 1 CRISPR screen"/>
</dbReference>
<dbReference type="CD-CODE" id="A6E1D014">
    <property type="entry name" value="P-body"/>
</dbReference>
<dbReference type="ChiTaRS" id="4E-T">
    <property type="organism name" value="fly"/>
</dbReference>
<dbReference type="EvolutionaryTrace" id="Q8IH18"/>
<dbReference type="GenomeRNAi" id="43836"/>
<dbReference type="PRO" id="PR:Q8IH18"/>
<dbReference type="Proteomes" id="UP000000803">
    <property type="component" value="Chromosome 4"/>
</dbReference>
<dbReference type="Bgee" id="FBgn0052016">
    <property type="expression patterns" value="Expressed in adult abdomen and 231 other cell types or tissues"/>
</dbReference>
<dbReference type="ExpressionAtlas" id="Q8IH18">
    <property type="expression patterns" value="baseline and differential"/>
</dbReference>
<dbReference type="GO" id="GO:0005737">
    <property type="term" value="C:cytoplasm"/>
    <property type="evidence" value="ECO:0000314"/>
    <property type="project" value="FlyBase"/>
</dbReference>
<dbReference type="GO" id="GO:0005829">
    <property type="term" value="C:cytosol"/>
    <property type="evidence" value="ECO:0000314"/>
    <property type="project" value="FlyBase"/>
</dbReference>
<dbReference type="GO" id="GO:0005634">
    <property type="term" value="C:nucleus"/>
    <property type="evidence" value="ECO:0000314"/>
    <property type="project" value="FlyBase"/>
</dbReference>
<dbReference type="GO" id="GO:0000932">
    <property type="term" value="C:P-body"/>
    <property type="evidence" value="ECO:0000314"/>
    <property type="project" value="FlyBase"/>
</dbReference>
<dbReference type="GO" id="GO:0008190">
    <property type="term" value="F:eukaryotic initiation factor 4E binding"/>
    <property type="evidence" value="ECO:0000314"/>
    <property type="project" value="FlyBase"/>
</dbReference>
<dbReference type="GO" id="GO:0003729">
    <property type="term" value="F:mRNA binding"/>
    <property type="evidence" value="ECO:0000318"/>
    <property type="project" value="GO_Central"/>
</dbReference>
<dbReference type="GO" id="GO:1905536">
    <property type="term" value="P:negative regulation of eukaryotic translation initiation factor 4F complex assembly"/>
    <property type="evidence" value="ECO:0000314"/>
    <property type="project" value="FlyBase"/>
</dbReference>
<dbReference type="GO" id="GO:0017148">
    <property type="term" value="P:negative regulation of translation"/>
    <property type="evidence" value="ECO:0000318"/>
    <property type="project" value="GO_Central"/>
</dbReference>
<dbReference type="InterPro" id="IPR018862">
    <property type="entry name" value="eIF4E-T"/>
</dbReference>
<dbReference type="PANTHER" id="PTHR12269">
    <property type="entry name" value="EUKARYOTIC TRANSLATION INITIATION FACTOR 4E TRANSPORTER"/>
    <property type="match status" value="1"/>
</dbReference>
<dbReference type="PANTHER" id="PTHR12269:SF1">
    <property type="entry name" value="EUKARYOTIC TRANSLATION INITIATION FACTOR 4E TRANSPORTER"/>
    <property type="match status" value="1"/>
</dbReference>
<dbReference type="Pfam" id="PF10477">
    <property type="entry name" value="EIF4E-T"/>
    <property type="match status" value="1"/>
</dbReference>